<protein>
    <recommendedName>
        <fullName evidence="2">Ribosomal RNA small subunit methyltransferase NEP1</fullName>
        <ecNumber evidence="2">2.1.1.-</ecNumber>
    </recommendedName>
    <alternativeName>
        <fullName evidence="2">18S rRNA (pseudouridine(1248)-N1)-methyltransferase</fullName>
    </alternativeName>
    <alternativeName>
        <fullName evidence="2">18S rRNA Psi1248 methyltransferase</fullName>
    </alternativeName>
    <alternativeName>
        <fullName evidence="2">Nucleolar protein EMG1 homolog</fullName>
    </alternativeName>
    <alternativeName>
        <fullName evidence="2">Protein C2f</fullName>
    </alternativeName>
    <alternativeName>
        <fullName evidence="2">Ribosome biogenesis protein NEP1</fullName>
    </alternativeName>
</protein>
<gene>
    <name evidence="2" type="primary">Emg1</name>
    <name evidence="2" type="synonym">C2f</name>
    <name type="synonym">Grcc2f</name>
</gene>
<dbReference type="EC" id="2.1.1.-" evidence="2"/>
<dbReference type="EMBL" id="AC002397">
    <property type="protein sequence ID" value="AAC36006.1"/>
    <property type="molecule type" value="Genomic_DNA"/>
</dbReference>
<dbReference type="EMBL" id="BC002004">
    <property type="protein sequence ID" value="AAH02004.1"/>
    <property type="molecule type" value="mRNA"/>
</dbReference>
<dbReference type="CCDS" id="CCDS20524.1"/>
<dbReference type="RefSeq" id="NP_038564.1">
    <property type="nucleotide sequence ID" value="NM_013536.3"/>
</dbReference>
<dbReference type="SMR" id="O35130"/>
<dbReference type="BioGRID" id="200052">
    <property type="interactions" value="4"/>
</dbReference>
<dbReference type="FunCoup" id="O35130">
    <property type="interactions" value="2619"/>
</dbReference>
<dbReference type="IntAct" id="O35130">
    <property type="interactions" value="1"/>
</dbReference>
<dbReference type="STRING" id="10090.ENSMUSP00000004379"/>
<dbReference type="iPTMnet" id="O35130"/>
<dbReference type="PhosphoSitePlus" id="O35130"/>
<dbReference type="jPOST" id="O35130"/>
<dbReference type="PaxDb" id="10090-ENSMUSP00000004379"/>
<dbReference type="PeptideAtlas" id="O35130"/>
<dbReference type="ProteomicsDB" id="252947"/>
<dbReference type="Pumba" id="O35130"/>
<dbReference type="Antibodypedia" id="6124">
    <property type="antibodies" value="188 antibodies from 24 providers"/>
</dbReference>
<dbReference type="DNASU" id="14791"/>
<dbReference type="Ensembl" id="ENSMUST00000004379.8">
    <property type="protein sequence ID" value="ENSMUSP00000004379.6"/>
    <property type="gene ID" value="ENSMUSG00000004268.12"/>
</dbReference>
<dbReference type="GeneID" id="14791"/>
<dbReference type="KEGG" id="mmu:14791"/>
<dbReference type="UCSC" id="uc009drg.2">
    <property type="organism name" value="mouse"/>
</dbReference>
<dbReference type="AGR" id="MGI:1315195"/>
<dbReference type="CTD" id="10436"/>
<dbReference type="MGI" id="MGI:1315195">
    <property type="gene designation" value="Emg1"/>
</dbReference>
<dbReference type="VEuPathDB" id="HostDB:ENSMUSG00000004268"/>
<dbReference type="eggNOG" id="KOG3073">
    <property type="taxonomic scope" value="Eukaryota"/>
</dbReference>
<dbReference type="GeneTree" id="ENSGT00390000000305"/>
<dbReference type="HOGENOM" id="CLU_055846_1_1_1"/>
<dbReference type="InParanoid" id="O35130"/>
<dbReference type="OMA" id="ECKFSND"/>
<dbReference type="OrthoDB" id="269804at2759"/>
<dbReference type="PhylomeDB" id="O35130"/>
<dbReference type="TreeFam" id="TF314335"/>
<dbReference type="Reactome" id="R-MMU-6791226">
    <property type="pathway name" value="Major pathway of rRNA processing in the nucleolus and cytosol"/>
</dbReference>
<dbReference type="BioGRID-ORCS" id="14791">
    <property type="hits" value="28 hits in 77 CRISPR screens"/>
</dbReference>
<dbReference type="ChiTaRS" id="Emg1">
    <property type="organism name" value="mouse"/>
</dbReference>
<dbReference type="PRO" id="PR:O35130"/>
<dbReference type="Proteomes" id="UP000000589">
    <property type="component" value="Chromosome 6"/>
</dbReference>
<dbReference type="RNAct" id="O35130">
    <property type="molecule type" value="protein"/>
</dbReference>
<dbReference type="Bgee" id="ENSMUSG00000004268">
    <property type="expression patterns" value="Expressed in medial ganglionic eminence and 267 other cell types or tissues"/>
</dbReference>
<dbReference type="ExpressionAtlas" id="O35130">
    <property type="expression patterns" value="baseline and differential"/>
</dbReference>
<dbReference type="GO" id="GO:0005694">
    <property type="term" value="C:chromosome"/>
    <property type="evidence" value="ECO:0007669"/>
    <property type="project" value="Ensembl"/>
</dbReference>
<dbReference type="GO" id="GO:0005730">
    <property type="term" value="C:nucleolus"/>
    <property type="evidence" value="ECO:0007669"/>
    <property type="project" value="UniProtKB-SubCell"/>
</dbReference>
<dbReference type="GO" id="GO:0005654">
    <property type="term" value="C:nucleoplasm"/>
    <property type="evidence" value="ECO:0007669"/>
    <property type="project" value="Ensembl"/>
</dbReference>
<dbReference type="GO" id="GO:0032040">
    <property type="term" value="C:small-subunit processome"/>
    <property type="evidence" value="ECO:0000250"/>
    <property type="project" value="UniProtKB"/>
</dbReference>
<dbReference type="GO" id="GO:0042802">
    <property type="term" value="F:identical protein binding"/>
    <property type="evidence" value="ECO:0007669"/>
    <property type="project" value="Ensembl"/>
</dbReference>
<dbReference type="GO" id="GO:0070037">
    <property type="term" value="F:rRNA (pseudouridine) methyltransferase activity"/>
    <property type="evidence" value="ECO:0000250"/>
    <property type="project" value="UniProtKB"/>
</dbReference>
<dbReference type="GO" id="GO:0019843">
    <property type="term" value="F:rRNA binding"/>
    <property type="evidence" value="ECO:0007669"/>
    <property type="project" value="UniProtKB-KW"/>
</dbReference>
<dbReference type="GO" id="GO:0001824">
    <property type="term" value="P:blastocyst development"/>
    <property type="evidence" value="ECO:0000315"/>
    <property type="project" value="MGI"/>
</dbReference>
<dbReference type="GO" id="GO:0017126">
    <property type="term" value="P:nucleologenesis"/>
    <property type="evidence" value="ECO:0000315"/>
    <property type="project" value="MGI"/>
</dbReference>
<dbReference type="GO" id="GO:0042274">
    <property type="term" value="P:ribosomal small subunit biogenesis"/>
    <property type="evidence" value="ECO:0000250"/>
    <property type="project" value="UniProtKB"/>
</dbReference>
<dbReference type="GO" id="GO:0070475">
    <property type="term" value="P:rRNA base methylation"/>
    <property type="evidence" value="ECO:0007669"/>
    <property type="project" value="InterPro"/>
</dbReference>
<dbReference type="CDD" id="cd18088">
    <property type="entry name" value="Nep1-like"/>
    <property type="match status" value="1"/>
</dbReference>
<dbReference type="FunFam" id="3.40.1280.10:FF:000003">
    <property type="entry name" value="Ribosomal RNA small subunit methyltransferase"/>
    <property type="match status" value="1"/>
</dbReference>
<dbReference type="Gene3D" id="3.40.1280.10">
    <property type="match status" value="1"/>
</dbReference>
<dbReference type="InterPro" id="IPR029028">
    <property type="entry name" value="Alpha/beta_knot_MTases"/>
</dbReference>
<dbReference type="InterPro" id="IPR005304">
    <property type="entry name" value="Rbsml_bgen_MeTrfase_EMG1/NEP1"/>
</dbReference>
<dbReference type="InterPro" id="IPR029026">
    <property type="entry name" value="tRNA_m1G_MTases_N"/>
</dbReference>
<dbReference type="PANTHER" id="PTHR12636">
    <property type="entry name" value="NEP1/MRA1"/>
    <property type="match status" value="1"/>
</dbReference>
<dbReference type="PANTHER" id="PTHR12636:SF5">
    <property type="entry name" value="RIBOSOMAL RNA SMALL SUBUNIT METHYLTRANSFERASE NEP1"/>
    <property type="match status" value="1"/>
</dbReference>
<dbReference type="Pfam" id="PF03587">
    <property type="entry name" value="EMG1"/>
    <property type="match status" value="1"/>
</dbReference>
<dbReference type="SUPFAM" id="SSF75217">
    <property type="entry name" value="alpha/beta knot"/>
    <property type="match status" value="1"/>
</dbReference>
<name>NEP1_MOUSE</name>
<organism>
    <name type="scientific">Mus musculus</name>
    <name type="common">Mouse</name>
    <dbReference type="NCBI Taxonomy" id="10090"/>
    <lineage>
        <taxon>Eukaryota</taxon>
        <taxon>Metazoa</taxon>
        <taxon>Chordata</taxon>
        <taxon>Craniata</taxon>
        <taxon>Vertebrata</taxon>
        <taxon>Euteleostomi</taxon>
        <taxon>Mammalia</taxon>
        <taxon>Eutheria</taxon>
        <taxon>Euarchontoglires</taxon>
        <taxon>Glires</taxon>
        <taxon>Rodentia</taxon>
        <taxon>Myomorpha</taxon>
        <taxon>Muroidea</taxon>
        <taxon>Muridae</taxon>
        <taxon>Murinae</taxon>
        <taxon>Mus</taxon>
        <taxon>Mus</taxon>
    </lineage>
</organism>
<reference key="1">
    <citation type="journal article" date="1998" name="Genome Res.">
        <title>Comparative sequence analysis of a gene-rich cluster at human chromosome 12p13 and its syntenic region in mouse chromosome 6.</title>
        <authorList>
            <person name="Ansari-Lari M.A."/>
            <person name="Oeltjen J.C."/>
            <person name="Schwartz S."/>
            <person name="Zhang Z."/>
            <person name="Muzny D.M."/>
            <person name="Lu J."/>
            <person name="Gorrell J.H."/>
            <person name="Chinault A.C."/>
            <person name="Belmont J.W."/>
            <person name="Miller W."/>
            <person name="Gibbs R.A."/>
        </authorList>
    </citation>
    <scope>NUCLEOTIDE SEQUENCE [GENOMIC DNA]</scope>
</reference>
<reference key="2">
    <citation type="journal article" date="2004" name="Genome Res.">
        <title>The status, quality, and expansion of the NIH full-length cDNA project: the Mammalian Gene Collection (MGC).</title>
        <authorList>
            <consortium name="The MGC Project Team"/>
        </authorList>
    </citation>
    <scope>NUCLEOTIDE SEQUENCE [LARGE SCALE MRNA]</scope>
</reference>
<reference key="3">
    <citation type="journal article" date="2010" name="Cell">
        <title>A tissue-specific atlas of mouse protein phosphorylation and expression.</title>
        <authorList>
            <person name="Huttlin E.L."/>
            <person name="Jedrychowski M.P."/>
            <person name="Elias J.E."/>
            <person name="Goswami T."/>
            <person name="Rad R."/>
            <person name="Beausoleil S.A."/>
            <person name="Villen J."/>
            <person name="Haas W."/>
            <person name="Sowa M.E."/>
            <person name="Gygi S.P."/>
        </authorList>
    </citation>
    <scope>PHOSPHORYLATION [LARGE SCALE ANALYSIS] AT SER-16</scope>
    <scope>IDENTIFICATION BY MASS SPECTROMETRY [LARGE SCALE ANALYSIS]</scope>
    <source>
        <tissue>Brown adipose tissue</tissue>
        <tissue>Kidney</tissue>
        <tissue>Lung</tissue>
        <tissue>Pancreas</tissue>
        <tissue>Spleen</tissue>
        <tissue>Testis</tissue>
    </source>
</reference>
<comment type="function">
    <text evidence="1 2">S-adenosyl-L-methionine-dependent pseudouridine N(1)-methyltransferase that methylates pseudouridine at position in 18S rRNA. Involved the biosynthesis of the hypermodified N1-methyl-N3-(3-amino-3-carboxypropyl) pseudouridine (m1acp3-Psi) conserved in eukaryotic 18S rRNA. Is not able to methylate uridine at this position (By similarity). Also has an essential role in 40S ribosomal subunit biogenesis independent on its methyltransferase activity, facilitating the incorporation of ribosomal protein S19 during the formation of pre-ribosomes (By similarity). Part of the small subunit (SSU) processome, first precursor of the small eukaryotic ribosomal subunit. During the assembly of the SSU processome in the nucleolus, many ribosome biogenesis factors, an RNA chaperone and ribosomal proteins associate with the nascent pre-rRNA and work in concert to generate RNA folding, modifications, rearrangements and cleavage as well as targeted degradation of pre-ribosomal RNA by the RNA exosome (By similarity).</text>
</comment>
<comment type="catalytic activity">
    <reaction evidence="2">
        <text>pseudouridine(1248) in human 18S rRNA + S-adenosyl-L-methionine = N(1)-methylpseudouridine(1248) in human 18S rRNA + S-adenosyl-L-homocysteine + H(+)</text>
        <dbReference type="Rhea" id="RHEA:46712"/>
        <dbReference type="Rhea" id="RHEA-COMP:11638"/>
        <dbReference type="Rhea" id="RHEA-COMP:11639"/>
        <dbReference type="ChEBI" id="CHEBI:15378"/>
        <dbReference type="ChEBI" id="CHEBI:57856"/>
        <dbReference type="ChEBI" id="CHEBI:59789"/>
        <dbReference type="ChEBI" id="CHEBI:65314"/>
        <dbReference type="ChEBI" id="CHEBI:74890"/>
    </reaction>
</comment>
<comment type="subunit">
    <text evidence="1 2">Homodimer. Part of the small subunit (SSU) processome, composed of more than 70 proteins and the RNA chaperone small nucleolar RNA (snoRNA) U3.</text>
</comment>
<comment type="subcellular location">
    <subcellularLocation>
        <location evidence="2">Nucleus</location>
        <location evidence="2">Nucleolus</location>
    </subcellularLocation>
</comment>
<comment type="similarity">
    <text evidence="4">Belongs to the class IV-like SAM-binding methyltransferase superfamily. RNA methyltransferase NEP1 family.</text>
</comment>
<proteinExistence type="evidence at protein level"/>
<accession>O35130</accession>
<keyword id="KW-0489">Methyltransferase</keyword>
<keyword id="KW-0539">Nucleus</keyword>
<keyword id="KW-0597">Phosphoprotein</keyword>
<keyword id="KW-1185">Reference proteome</keyword>
<keyword id="KW-0690">Ribosome biogenesis</keyword>
<keyword id="KW-0694">RNA-binding</keyword>
<keyword id="KW-0698">rRNA processing</keyword>
<keyword id="KW-0699">rRNA-binding</keyword>
<keyword id="KW-0949">S-adenosyl-L-methionine</keyword>
<keyword id="KW-0808">Transferase</keyword>
<evidence type="ECO:0000250" key="1">
    <source>
        <dbReference type="UniProtKB" id="Q06287"/>
    </source>
</evidence>
<evidence type="ECO:0000250" key="2">
    <source>
        <dbReference type="UniProtKB" id="Q92979"/>
    </source>
</evidence>
<evidence type="ECO:0000256" key="3">
    <source>
        <dbReference type="SAM" id="MobiDB-lite"/>
    </source>
</evidence>
<evidence type="ECO:0000305" key="4"/>
<evidence type="ECO:0007744" key="5">
    <source>
    </source>
</evidence>
<feature type="chain" id="PRO_0000158607" description="Ribosomal RNA small subunit methyltransferase NEP1">
    <location>
        <begin position="1"/>
        <end position="244"/>
    </location>
</feature>
<feature type="region of interest" description="Disordered" evidence="3">
    <location>
        <begin position="1"/>
        <end position="33"/>
    </location>
</feature>
<feature type="binding site" evidence="1">
    <location>
        <position position="176"/>
    </location>
    <ligand>
        <name>S-adenosyl-L-methionine</name>
        <dbReference type="ChEBI" id="CHEBI:59789"/>
    </ligand>
</feature>
<feature type="binding site" evidence="1">
    <location>
        <position position="201"/>
    </location>
    <ligand>
        <name>S-adenosyl-L-methionine</name>
        <dbReference type="ChEBI" id="CHEBI:59789"/>
    </ligand>
</feature>
<feature type="binding site" evidence="1">
    <location>
        <position position="206"/>
    </location>
    <ligand>
        <name>S-adenosyl-L-methionine</name>
        <dbReference type="ChEBI" id="CHEBI:59789"/>
    </ligand>
</feature>
<feature type="binding site" evidence="1">
    <location>
        <begin position="219"/>
        <end position="224"/>
    </location>
    <ligand>
        <name>S-adenosyl-L-methionine</name>
        <dbReference type="ChEBI" id="CHEBI:59789"/>
    </ligand>
</feature>
<feature type="site" description="Interaction with substrate rRNA" evidence="1">
    <location>
        <position position="84"/>
    </location>
</feature>
<feature type="site" description="Stabilizes Arg-84" evidence="1">
    <location>
        <position position="86"/>
    </location>
</feature>
<feature type="site" description="Interaction with substrate rRNA" evidence="1">
    <location>
        <position position="125"/>
    </location>
</feature>
<feature type="site" description="Interaction with substrate rRNA" evidence="1">
    <location>
        <position position="128"/>
    </location>
</feature>
<feature type="site" description="Interaction with substrate rRNA" evidence="1">
    <location>
        <position position="132"/>
    </location>
</feature>
<feature type="modified residue" description="Phosphoserine" evidence="2">
    <location>
        <position position="5"/>
    </location>
</feature>
<feature type="modified residue" description="Phosphoserine" evidence="5">
    <location>
        <position position="16"/>
    </location>
</feature>
<sequence length="244" mass="26974">MSAASGGFQPRERRFSVQEQDWETTPPKKLRLGAGSKCGGRRLIVVLEGASLETVKVGKTYELLNCDRHKSMLLKNGRDPGEVRPDITHQSLLMLMDSPLNRAGLLQVYIHTQKNVLIEVNPQTRIPRTFDRFCGLMVQLLHKLSVRAADGPQKLLKVIKNPVSDHFPVGCMKIGTSFSVEDISDIRELVPSSDPVVFVVGAFAHGKVSVEYTEKMVSISNYPLSAALTCAKVTTAFEEVWGVI</sequence>